<accession>P0AGK3</accession>
<accession>P26601</accession>
<proteinExistence type="inferred from homology"/>
<gene>
    <name evidence="1" type="primary">ubiA</name>
    <name type="ordered locus">Z5639</name>
    <name type="ordered locus">ECs5023</name>
</gene>
<protein>
    <recommendedName>
        <fullName evidence="1">4-hydroxybenzoate octaprenyltransferase</fullName>
        <ecNumber evidence="1">2.5.1.39</ecNumber>
    </recommendedName>
    <alternativeName>
        <fullName evidence="1">4-HB polyprenyltransferase</fullName>
    </alternativeName>
</protein>
<dbReference type="EC" id="2.5.1.39" evidence="1"/>
<dbReference type="EMBL" id="AE005174">
    <property type="protein sequence ID" value="AAG59239.1"/>
    <property type="molecule type" value="Genomic_DNA"/>
</dbReference>
<dbReference type="EMBL" id="BA000007">
    <property type="protein sequence ID" value="BAB38446.1"/>
    <property type="molecule type" value="Genomic_DNA"/>
</dbReference>
<dbReference type="PIR" id="G91256">
    <property type="entry name" value="G91256"/>
</dbReference>
<dbReference type="RefSeq" id="NP_313050.1">
    <property type="nucleotide sequence ID" value="NC_002695.1"/>
</dbReference>
<dbReference type="RefSeq" id="WP_000455227.1">
    <property type="nucleotide sequence ID" value="NZ_VOAI01000027.1"/>
</dbReference>
<dbReference type="SMR" id="P0AGK3"/>
<dbReference type="STRING" id="155864.Z5639"/>
<dbReference type="GeneID" id="915051"/>
<dbReference type="GeneID" id="93777791"/>
<dbReference type="KEGG" id="ece:Z5639"/>
<dbReference type="KEGG" id="ecs:ECs_5023"/>
<dbReference type="PATRIC" id="fig|386585.9.peg.5246"/>
<dbReference type="eggNOG" id="COG0382">
    <property type="taxonomic scope" value="Bacteria"/>
</dbReference>
<dbReference type="HOGENOM" id="CLU_034879_1_0_6"/>
<dbReference type="OMA" id="KFEHTIF"/>
<dbReference type="UniPathway" id="UPA00232"/>
<dbReference type="Proteomes" id="UP000000558">
    <property type="component" value="Chromosome"/>
</dbReference>
<dbReference type="Proteomes" id="UP000002519">
    <property type="component" value="Chromosome"/>
</dbReference>
<dbReference type="GO" id="GO:0005886">
    <property type="term" value="C:plasma membrane"/>
    <property type="evidence" value="ECO:0007669"/>
    <property type="project" value="UniProtKB-SubCell"/>
</dbReference>
<dbReference type="GO" id="GO:0008412">
    <property type="term" value="F:4-hydroxybenzoate polyprenyltransferase activity"/>
    <property type="evidence" value="ECO:0007669"/>
    <property type="project" value="UniProtKB-UniRule"/>
</dbReference>
<dbReference type="GO" id="GO:0006744">
    <property type="term" value="P:ubiquinone biosynthetic process"/>
    <property type="evidence" value="ECO:0007669"/>
    <property type="project" value="UniProtKB-UniRule"/>
</dbReference>
<dbReference type="CDD" id="cd13959">
    <property type="entry name" value="PT_UbiA_COQ2"/>
    <property type="match status" value="1"/>
</dbReference>
<dbReference type="FunFam" id="1.10.357.140:FF:000002">
    <property type="entry name" value="4-hydroxybenzoate octaprenyltransferase"/>
    <property type="match status" value="1"/>
</dbReference>
<dbReference type="FunFam" id="1.20.120.1780:FF:000001">
    <property type="entry name" value="4-hydroxybenzoate octaprenyltransferase"/>
    <property type="match status" value="1"/>
</dbReference>
<dbReference type="Gene3D" id="1.10.357.140">
    <property type="entry name" value="UbiA prenyltransferase"/>
    <property type="match status" value="1"/>
</dbReference>
<dbReference type="Gene3D" id="1.20.120.1780">
    <property type="entry name" value="UbiA prenyltransferase"/>
    <property type="match status" value="1"/>
</dbReference>
<dbReference type="HAMAP" id="MF_01635">
    <property type="entry name" value="UbiA"/>
    <property type="match status" value="1"/>
</dbReference>
<dbReference type="InterPro" id="IPR006370">
    <property type="entry name" value="HB_polyprenyltransferase-like"/>
</dbReference>
<dbReference type="InterPro" id="IPR039653">
    <property type="entry name" value="Prenyltransferase"/>
</dbReference>
<dbReference type="InterPro" id="IPR000537">
    <property type="entry name" value="UbiA_prenyltransferase"/>
</dbReference>
<dbReference type="InterPro" id="IPR030470">
    <property type="entry name" value="UbiA_prenylTrfase_CS"/>
</dbReference>
<dbReference type="InterPro" id="IPR044878">
    <property type="entry name" value="UbiA_sf"/>
</dbReference>
<dbReference type="NCBIfam" id="TIGR01474">
    <property type="entry name" value="ubiA_proteo"/>
    <property type="match status" value="1"/>
</dbReference>
<dbReference type="PANTHER" id="PTHR11048:SF28">
    <property type="entry name" value="4-HYDROXYBENZOATE POLYPRENYLTRANSFERASE, MITOCHONDRIAL"/>
    <property type="match status" value="1"/>
</dbReference>
<dbReference type="PANTHER" id="PTHR11048">
    <property type="entry name" value="PRENYLTRANSFERASES"/>
    <property type="match status" value="1"/>
</dbReference>
<dbReference type="Pfam" id="PF01040">
    <property type="entry name" value="UbiA"/>
    <property type="match status" value="1"/>
</dbReference>
<dbReference type="PROSITE" id="PS00943">
    <property type="entry name" value="UBIA"/>
    <property type="match status" value="1"/>
</dbReference>
<name>UBIA_ECO57</name>
<feature type="chain" id="PRO_0000162891" description="4-hydroxybenzoate octaprenyltransferase">
    <location>
        <begin position="1"/>
        <end position="290"/>
    </location>
</feature>
<feature type="transmembrane region" description="Helical" evidence="1">
    <location>
        <begin position="23"/>
        <end position="43"/>
    </location>
</feature>
<feature type="transmembrane region" description="Helical" evidence="1">
    <location>
        <begin position="46"/>
        <end position="66"/>
    </location>
</feature>
<feature type="transmembrane region" description="Helical" evidence="1">
    <location>
        <begin position="99"/>
        <end position="119"/>
    </location>
</feature>
<feature type="transmembrane region" description="Helical" evidence="1">
    <location>
        <begin position="141"/>
        <end position="161"/>
    </location>
</feature>
<feature type="transmembrane region" description="Helical" evidence="1">
    <location>
        <begin position="163"/>
        <end position="183"/>
    </location>
</feature>
<feature type="transmembrane region" description="Helical" evidence="1">
    <location>
        <begin position="213"/>
        <end position="233"/>
    </location>
</feature>
<feature type="transmembrane region" description="Helical" evidence="1">
    <location>
        <begin position="234"/>
        <end position="254"/>
    </location>
</feature>
<feature type="transmembrane region" description="Helical" evidence="1">
    <location>
        <begin position="268"/>
        <end position="288"/>
    </location>
</feature>
<comment type="function">
    <text evidence="1">Catalyzes the prenylation of para-hydroxybenzoate (PHB) with an all-trans polyprenyl group. Mediates the second step in the final reaction sequence of ubiquinone-8 (UQ-8) biosynthesis, which is the condensation of the polyisoprenoid side chain with PHB, generating the first membrane-bound Q intermediate 3-octaprenyl-4-hydroxybenzoate.</text>
</comment>
<comment type="catalytic activity">
    <reaction evidence="1">
        <text>all-trans-octaprenyl diphosphate + 4-hydroxybenzoate = 4-hydroxy-3-(all-trans-octaprenyl)benzoate + diphosphate</text>
        <dbReference type="Rhea" id="RHEA:27782"/>
        <dbReference type="ChEBI" id="CHEBI:1617"/>
        <dbReference type="ChEBI" id="CHEBI:17879"/>
        <dbReference type="ChEBI" id="CHEBI:33019"/>
        <dbReference type="ChEBI" id="CHEBI:57711"/>
        <dbReference type="EC" id="2.5.1.39"/>
    </reaction>
</comment>
<comment type="cofactor">
    <cofactor evidence="1">
        <name>Mg(2+)</name>
        <dbReference type="ChEBI" id="CHEBI:18420"/>
    </cofactor>
</comment>
<comment type="pathway">
    <text evidence="1">Cofactor biosynthesis; ubiquinone biosynthesis.</text>
</comment>
<comment type="subcellular location">
    <subcellularLocation>
        <location evidence="1">Cell inner membrane</location>
        <topology evidence="1">Multi-pass membrane protein</topology>
    </subcellularLocation>
</comment>
<comment type="similarity">
    <text evidence="1">Belongs to the UbiA prenyltransferase family.</text>
</comment>
<sequence>MEWSLTQNKLLAFHRLMRTDKPIGALLLLWPTLWALWVATPGVPQLWILAVFVAGVWLMRAAGCVVNDYADRKFDGHVKRTANRPLPSGAVTEKEARALFVVLVLISFLLVLTLNTMTILLSIAALALAWVYPFMKRYTHLPQVVLGAAFGWSIPMAFAAVSESVPLSCWLMFLANILWAVAYDTQYAMVDRDDDVKIGIKSTAILFGQYDKLIIGILQIGVLALMAIIGELNGLGWGYYWSILVAGALFVYQQKLIANREREACFKAFMNNNYVGLVLFLGLAMSYWHF</sequence>
<organism>
    <name type="scientific">Escherichia coli O157:H7</name>
    <dbReference type="NCBI Taxonomy" id="83334"/>
    <lineage>
        <taxon>Bacteria</taxon>
        <taxon>Pseudomonadati</taxon>
        <taxon>Pseudomonadota</taxon>
        <taxon>Gammaproteobacteria</taxon>
        <taxon>Enterobacterales</taxon>
        <taxon>Enterobacteriaceae</taxon>
        <taxon>Escherichia</taxon>
    </lineage>
</organism>
<reference key="1">
    <citation type="journal article" date="2001" name="Nature">
        <title>Genome sequence of enterohaemorrhagic Escherichia coli O157:H7.</title>
        <authorList>
            <person name="Perna N.T."/>
            <person name="Plunkett G. III"/>
            <person name="Burland V."/>
            <person name="Mau B."/>
            <person name="Glasner J.D."/>
            <person name="Rose D.J."/>
            <person name="Mayhew G.F."/>
            <person name="Evans P.S."/>
            <person name="Gregor J."/>
            <person name="Kirkpatrick H.A."/>
            <person name="Posfai G."/>
            <person name="Hackett J."/>
            <person name="Klink S."/>
            <person name="Boutin A."/>
            <person name="Shao Y."/>
            <person name="Miller L."/>
            <person name="Grotbeck E.J."/>
            <person name="Davis N.W."/>
            <person name="Lim A."/>
            <person name="Dimalanta E.T."/>
            <person name="Potamousis K."/>
            <person name="Apodaca J."/>
            <person name="Anantharaman T.S."/>
            <person name="Lin J."/>
            <person name="Yen G."/>
            <person name="Schwartz D.C."/>
            <person name="Welch R.A."/>
            <person name="Blattner F.R."/>
        </authorList>
    </citation>
    <scope>NUCLEOTIDE SEQUENCE [LARGE SCALE GENOMIC DNA]</scope>
    <source>
        <strain>O157:H7 / EDL933 / ATCC 700927 / EHEC</strain>
    </source>
</reference>
<reference key="2">
    <citation type="journal article" date="2001" name="DNA Res.">
        <title>Complete genome sequence of enterohemorrhagic Escherichia coli O157:H7 and genomic comparison with a laboratory strain K-12.</title>
        <authorList>
            <person name="Hayashi T."/>
            <person name="Makino K."/>
            <person name="Ohnishi M."/>
            <person name="Kurokawa K."/>
            <person name="Ishii K."/>
            <person name="Yokoyama K."/>
            <person name="Han C.-G."/>
            <person name="Ohtsubo E."/>
            <person name="Nakayama K."/>
            <person name="Murata T."/>
            <person name="Tanaka M."/>
            <person name="Tobe T."/>
            <person name="Iida T."/>
            <person name="Takami H."/>
            <person name="Honda T."/>
            <person name="Sasakawa C."/>
            <person name="Ogasawara N."/>
            <person name="Yasunaga T."/>
            <person name="Kuhara S."/>
            <person name="Shiba T."/>
            <person name="Hattori M."/>
            <person name="Shinagawa H."/>
        </authorList>
    </citation>
    <scope>NUCLEOTIDE SEQUENCE [LARGE SCALE GENOMIC DNA]</scope>
    <source>
        <strain>O157:H7 / Sakai / RIMD 0509952 / EHEC</strain>
    </source>
</reference>
<keyword id="KW-0997">Cell inner membrane</keyword>
<keyword id="KW-1003">Cell membrane</keyword>
<keyword id="KW-0460">Magnesium</keyword>
<keyword id="KW-0472">Membrane</keyword>
<keyword id="KW-1185">Reference proteome</keyword>
<keyword id="KW-0808">Transferase</keyword>
<keyword id="KW-0812">Transmembrane</keyword>
<keyword id="KW-1133">Transmembrane helix</keyword>
<keyword id="KW-0831">Ubiquinone biosynthesis</keyword>
<evidence type="ECO:0000255" key="1">
    <source>
        <dbReference type="HAMAP-Rule" id="MF_01635"/>
    </source>
</evidence>